<comment type="function">
    <text evidence="1">May be involved in a process influencing telomere capping.</text>
</comment>
<comment type="subcellular location">
    <subcellularLocation>
        <location evidence="1">Vacuole</location>
    </subcellularLocation>
</comment>
<comment type="similarity">
    <text evidence="4">Belongs to the WD repeat RTC1 family.</text>
</comment>
<organism>
    <name type="scientific">Kluyveromyces lactis (strain ATCC 8585 / CBS 2359 / DSM 70799 / NBRC 1267 / NRRL Y-1140 / WM37)</name>
    <name type="common">Yeast</name>
    <name type="synonym">Candida sphaerica</name>
    <dbReference type="NCBI Taxonomy" id="284590"/>
    <lineage>
        <taxon>Eukaryota</taxon>
        <taxon>Fungi</taxon>
        <taxon>Dikarya</taxon>
        <taxon>Ascomycota</taxon>
        <taxon>Saccharomycotina</taxon>
        <taxon>Saccharomycetes</taxon>
        <taxon>Saccharomycetales</taxon>
        <taxon>Saccharomycetaceae</taxon>
        <taxon>Kluyveromyces</taxon>
    </lineage>
</organism>
<sequence length="1321" mass="147003">MFKRGSNRATSSSQGQQPENPPSLKYQSSSSRYSFHRQYNTGFGTSPFRISPKYKPDSRTPFSFDGTGNVGPESSLNEEESNARWRPSESSFDKRRTFHGAKYSLSIGKEVSSIDKINSPESRSLIIAGKSHLGIYTFDEDSKTITNVHDFLQTAKTNTGITKNTSSTLRRTTKKISTISDVKAGFYNHKNYVAICGTSTSVAIYDINKTSAIDNPVVTSLSEHTRSINSVDFNMVQTSLLISGGQDGCIKIWDLRSPKISTTRSDVSINTGSDSIRDVKWMPSYEFSNDTNGLSNRHFKFASVHDSGLLLKFDLRQPNQAEKKINAHSGPALCLNWHPHQDYIISGGRDGKCCLWYVGDKSNQVGNISSTNLNSSNPATHNLSSSYPLGLSNTLAFPELTINTARSMNKLKFRPKYETNVFNSLIGTSSMGEDSDVSVYSLARKYIPKNVIASSAPSVGFVWWDDDTIFNIDKQNTVTGWDISHEPTVLDNLPKNTIKWRDLDGDGILFLDQKPGGYLSQEETVLTPGSGENRKMPFTHRMSSATANSFTGGNNPNITSNTSSSAASFSKNPTLGMSQLHQGNVLGERSTMSKHAQSVNSKFSPSVNSSPWTNPYSSPHHNSIVSGSESALHAVNDSFLQSPYLIGLDFPHILNTIRNTRLAEFNRKVESAALLELKSSPTEVFKFLARELKFSYKYNSIETKDNGRELDSSSTHGSVDSKTNLMEKLGLSENNTWTHLIKYTKSHDSDEVISKGTELKTPVSDKSANIEKSATNHKAETNQDENSSCINSSNQVKTKNLIELITLCDKNAEIYIMLEDFSNYKIWLLMRDSLLWDLKVLTESMAVDVTADQEVNDQSSIDQPWKKNDSFTSLKEARQASVASGYSSYSATDLSSSVNTNNRHSFNEPTHLTQTPPVSHLKAQLQGSKETTTISRADSIQNSLQNDIIEIRKLRQSHGDRAELAIDEEEEGEEREELTKRAFEEDENNKQFINIPRRESGPSALMPSPSHVSSQSEIPSNPENHHQPRRPRTSFIDSFMSQLRSPGSSNVDADRESTGSKKSSMPSFSSSAATFLNSKKSQNANHNKLKSATEVSDILESEFATQKSWNGSVAKTTTQMSGITALMNETKKLENTITPPWSSRRLIHQLYEQSVASGNILLTMAILLLFQDMFQLVDTETVKNSIAEFTELLHRYELFEIAAELMKNCPYEDISSSSAGFSSIQLFCDKCNKPLVNESSKEKIIKERLEGNSSAMSRFGYWYCDSCSKRNTLCCFCNKPMKSLAISMLNCGHEGHFECLKKWFFDENMDVCPLGCPAILF</sequence>
<protein>
    <recommendedName>
        <fullName>Restriction of telomere capping protein 1</fullName>
    </recommendedName>
</protein>
<accession>Q6CME1</accession>
<feature type="chain" id="PRO_0000408784" description="Restriction of telomere capping protein 1">
    <location>
        <begin position="1"/>
        <end position="1321"/>
    </location>
</feature>
<feature type="repeat" description="WD 1">
    <location>
        <begin position="109"/>
        <end position="148"/>
    </location>
</feature>
<feature type="repeat" description="WD 2">
    <location>
        <begin position="174"/>
        <end position="215"/>
    </location>
</feature>
<feature type="repeat" description="WD 3">
    <location>
        <begin position="223"/>
        <end position="263"/>
    </location>
</feature>
<feature type="repeat" description="WD 4">
    <location>
        <begin position="271"/>
        <end position="323"/>
    </location>
</feature>
<feature type="repeat" description="WD 5">
    <location>
        <begin position="327"/>
        <end position="366"/>
    </location>
</feature>
<feature type="repeat" description="WD 6">
    <location>
        <begin position="403"/>
        <end position="450"/>
    </location>
</feature>
<feature type="repeat" description="WD 7">
    <location>
        <begin position="453"/>
        <end position="491"/>
    </location>
</feature>
<feature type="repeat" description="WD 8">
    <location>
        <begin position="797"/>
        <end position="837"/>
    </location>
</feature>
<feature type="repeat" description="WD 9">
    <location>
        <begin position="1108"/>
        <end position="1151"/>
    </location>
</feature>
<feature type="zinc finger region" description="RING-type; degenerate" evidence="2">
    <location>
        <begin position="1274"/>
        <end position="1316"/>
    </location>
</feature>
<feature type="region of interest" description="Disordered" evidence="3">
    <location>
        <begin position="1"/>
        <end position="91"/>
    </location>
</feature>
<feature type="region of interest" description="Disordered" evidence="3">
    <location>
        <begin position="546"/>
        <end position="574"/>
    </location>
</feature>
<feature type="region of interest" description="Disordered" evidence="3">
    <location>
        <begin position="589"/>
        <end position="611"/>
    </location>
</feature>
<feature type="region of interest" description="Disordered" evidence="3">
    <location>
        <begin position="893"/>
        <end position="917"/>
    </location>
</feature>
<feature type="region of interest" description="Disordered" evidence="3">
    <location>
        <begin position="957"/>
        <end position="1069"/>
    </location>
</feature>
<feature type="compositionally biased region" description="Polar residues" evidence="3">
    <location>
        <begin position="7"/>
        <end position="18"/>
    </location>
</feature>
<feature type="compositionally biased region" description="Low complexity" evidence="3">
    <location>
        <begin position="23"/>
        <end position="33"/>
    </location>
</feature>
<feature type="compositionally biased region" description="Basic and acidic residues" evidence="3">
    <location>
        <begin position="81"/>
        <end position="91"/>
    </location>
</feature>
<feature type="compositionally biased region" description="Low complexity" evidence="3">
    <location>
        <begin position="551"/>
        <end position="574"/>
    </location>
</feature>
<feature type="compositionally biased region" description="Polar residues" evidence="3">
    <location>
        <begin position="593"/>
        <end position="611"/>
    </location>
</feature>
<feature type="compositionally biased region" description="Polar residues" evidence="3">
    <location>
        <begin position="898"/>
        <end position="917"/>
    </location>
</feature>
<feature type="compositionally biased region" description="Acidic residues" evidence="3">
    <location>
        <begin position="965"/>
        <end position="976"/>
    </location>
</feature>
<feature type="compositionally biased region" description="Polar residues" evidence="3">
    <location>
        <begin position="1010"/>
        <end position="1022"/>
    </location>
</feature>
<feature type="compositionally biased region" description="Polar residues" evidence="3">
    <location>
        <begin position="1035"/>
        <end position="1051"/>
    </location>
</feature>
<feature type="compositionally biased region" description="Low complexity" evidence="3">
    <location>
        <begin position="1060"/>
        <end position="1069"/>
    </location>
</feature>
<evidence type="ECO:0000250" key="1"/>
<evidence type="ECO:0000255" key="2">
    <source>
        <dbReference type="PROSITE-ProRule" id="PRU00175"/>
    </source>
</evidence>
<evidence type="ECO:0000256" key="3">
    <source>
        <dbReference type="SAM" id="MobiDB-lite"/>
    </source>
</evidence>
<evidence type="ECO:0000305" key="4"/>
<reference key="1">
    <citation type="journal article" date="2004" name="Nature">
        <title>Genome evolution in yeasts.</title>
        <authorList>
            <person name="Dujon B."/>
            <person name="Sherman D."/>
            <person name="Fischer G."/>
            <person name="Durrens P."/>
            <person name="Casaregola S."/>
            <person name="Lafontaine I."/>
            <person name="de Montigny J."/>
            <person name="Marck C."/>
            <person name="Neuveglise C."/>
            <person name="Talla E."/>
            <person name="Goffard N."/>
            <person name="Frangeul L."/>
            <person name="Aigle M."/>
            <person name="Anthouard V."/>
            <person name="Babour A."/>
            <person name="Barbe V."/>
            <person name="Barnay S."/>
            <person name="Blanchin S."/>
            <person name="Beckerich J.-M."/>
            <person name="Beyne E."/>
            <person name="Bleykasten C."/>
            <person name="Boisrame A."/>
            <person name="Boyer J."/>
            <person name="Cattolico L."/>
            <person name="Confanioleri F."/>
            <person name="de Daruvar A."/>
            <person name="Despons L."/>
            <person name="Fabre E."/>
            <person name="Fairhead C."/>
            <person name="Ferry-Dumazet H."/>
            <person name="Groppi A."/>
            <person name="Hantraye F."/>
            <person name="Hennequin C."/>
            <person name="Jauniaux N."/>
            <person name="Joyet P."/>
            <person name="Kachouri R."/>
            <person name="Kerrest A."/>
            <person name="Koszul R."/>
            <person name="Lemaire M."/>
            <person name="Lesur I."/>
            <person name="Ma L."/>
            <person name="Muller H."/>
            <person name="Nicaud J.-M."/>
            <person name="Nikolski M."/>
            <person name="Oztas S."/>
            <person name="Ozier-Kalogeropoulos O."/>
            <person name="Pellenz S."/>
            <person name="Potier S."/>
            <person name="Richard G.-F."/>
            <person name="Straub M.-L."/>
            <person name="Suleau A."/>
            <person name="Swennen D."/>
            <person name="Tekaia F."/>
            <person name="Wesolowski-Louvel M."/>
            <person name="Westhof E."/>
            <person name="Wirth B."/>
            <person name="Zeniou-Meyer M."/>
            <person name="Zivanovic Y."/>
            <person name="Bolotin-Fukuhara M."/>
            <person name="Thierry A."/>
            <person name="Bouchier C."/>
            <person name="Caudron B."/>
            <person name="Scarpelli C."/>
            <person name="Gaillardin C."/>
            <person name="Weissenbach J."/>
            <person name="Wincker P."/>
            <person name="Souciet J.-L."/>
        </authorList>
    </citation>
    <scope>NUCLEOTIDE SEQUENCE [LARGE SCALE GENOMIC DNA]</scope>
    <source>
        <strain>ATCC 8585 / CBS 2359 / DSM 70799 / NBRC 1267 / NRRL Y-1140 / WM37</strain>
    </source>
</reference>
<proteinExistence type="inferred from homology"/>
<name>RTC1_KLULA</name>
<dbReference type="EMBL" id="CR382125">
    <property type="protein sequence ID" value="CAG99985.1"/>
    <property type="molecule type" value="Genomic_DNA"/>
</dbReference>
<dbReference type="RefSeq" id="XP_454898.1">
    <property type="nucleotide sequence ID" value="XM_454898.1"/>
</dbReference>
<dbReference type="SMR" id="Q6CME1"/>
<dbReference type="FunCoup" id="Q6CME1">
    <property type="interactions" value="138"/>
</dbReference>
<dbReference type="STRING" id="284590.Q6CME1"/>
<dbReference type="PaxDb" id="284590-Q6CME1"/>
<dbReference type="KEGG" id="kla:KLLA0_E20967g"/>
<dbReference type="eggNOG" id="KOG0269">
    <property type="taxonomic scope" value="Eukaryota"/>
</dbReference>
<dbReference type="HOGENOM" id="CLU_008512_0_0_1"/>
<dbReference type="InParanoid" id="Q6CME1"/>
<dbReference type="OMA" id="GRDGKCC"/>
<dbReference type="Proteomes" id="UP000000598">
    <property type="component" value="Chromosome E"/>
</dbReference>
<dbReference type="GO" id="GO:0005829">
    <property type="term" value="C:cytosol"/>
    <property type="evidence" value="ECO:0007669"/>
    <property type="project" value="TreeGrafter"/>
</dbReference>
<dbReference type="GO" id="GO:0061700">
    <property type="term" value="C:GATOR2 complex"/>
    <property type="evidence" value="ECO:0007669"/>
    <property type="project" value="TreeGrafter"/>
</dbReference>
<dbReference type="GO" id="GO:0005774">
    <property type="term" value="C:vacuolar membrane"/>
    <property type="evidence" value="ECO:0007669"/>
    <property type="project" value="TreeGrafter"/>
</dbReference>
<dbReference type="GO" id="GO:0008270">
    <property type="term" value="F:zinc ion binding"/>
    <property type="evidence" value="ECO:0007669"/>
    <property type="project" value="UniProtKB-KW"/>
</dbReference>
<dbReference type="GO" id="GO:0016239">
    <property type="term" value="P:positive regulation of macroautophagy"/>
    <property type="evidence" value="ECO:0007669"/>
    <property type="project" value="TreeGrafter"/>
</dbReference>
<dbReference type="GO" id="GO:1904263">
    <property type="term" value="P:positive regulation of TORC1 signaling"/>
    <property type="evidence" value="ECO:0007669"/>
    <property type="project" value="TreeGrafter"/>
</dbReference>
<dbReference type="CDD" id="cd16488">
    <property type="entry name" value="mRING-H2-C3H3C2_Mio-like"/>
    <property type="match status" value="1"/>
</dbReference>
<dbReference type="Gene3D" id="2.130.10.10">
    <property type="entry name" value="YVTN repeat-like/Quinoprotein amine dehydrogenase"/>
    <property type="match status" value="1"/>
</dbReference>
<dbReference type="InterPro" id="IPR015943">
    <property type="entry name" value="WD40/YVTN_repeat-like_dom_sf"/>
</dbReference>
<dbReference type="InterPro" id="IPR019775">
    <property type="entry name" value="WD40_repeat_CS"/>
</dbReference>
<dbReference type="InterPro" id="IPR036322">
    <property type="entry name" value="WD40_repeat_dom_sf"/>
</dbReference>
<dbReference type="InterPro" id="IPR001680">
    <property type="entry name" value="WD40_rpt"/>
</dbReference>
<dbReference type="InterPro" id="IPR037590">
    <property type="entry name" value="WDR24"/>
</dbReference>
<dbReference type="InterPro" id="IPR049566">
    <property type="entry name" value="WDR59_RTC1-like_RING_Znf"/>
</dbReference>
<dbReference type="InterPro" id="IPR001841">
    <property type="entry name" value="Znf_RING"/>
</dbReference>
<dbReference type="PANTHER" id="PTHR46200">
    <property type="entry name" value="GATOR COMPLEX PROTEIN WDR24"/>
    <property type="match status" value="1"/>
</dbReference>
<dbReference type="PANTHER" id="PTHR46200:SF1">
    <property type="entry name" value="GATOR COMPLEX PROTEIN WDR24"/>
    <property type="match status" value="1"/>
</dbReference>
<dbReference type="Pfam" id="PF00400">
    <property type="entry name" value="WD40"/>
    <property type="match status" value="2"/>
</dbReference>
<dbReference type="Pfam" id="PF17120">
    <property type="entry name" value="zf-RING_16"/>
    <property type="match status" value="1"/>
</dbReference>
<dbReference type="SMART" id="SM00320">
    <property type="entry name" value="WD40"/>
    <property type="match status" value="3"/>
</dbReference>
<dbReference type="SUPFAM" id="SSF50978">
    <property type="entry name" value="WD40 repeat-like"/>
    <property type="match status" value="1"/>
</dbReference>
<dbReference type="PROSITE" id="PS00678">
    <property type="entry name" value="WD_REPEATS_1"/>
    <property type="match status" value="1"/>
</dbReference>
<dbReference type="PROSITE" id="PS50082">
    <property type="entry name" value="WD_REPEATS_2"/>
    <property type="match status" value="2"/>
</dbReference>
<dbReference type="PROSITE" id="PS50294">
    <property type="entry name" value="WD_REPEATS_REGION"/>
    <property type="match status" value="1"/>
</dbReference>
<dbReference type="PROSITE" id="PS50089">
    <property type="entry name" value="ZF_RING_2"/>
    <property type="match status" value="1"/>
</dbReference>
<gene>
    <name type="primary">RTC1</name>
    <name type="ordered locus">KLLA0E20967g</name>
</gene>
<keyword id="KW-0479">Metal-binding</keyword>
<keyword id="KW-1185">Reference proteome</keyword>
<keyword id="KW-0677">Repeat</keyword>
<keyword id="KW-0926">Vacuole</keyword>
<keyword id="KW-0853">WD repeat</keyword>
<keyword id="KW-0862">Zinc</keyword>
<keyword id="KW-0863">Zinc-finger</keyword>